<organism>
    <name type="scientific">Scyliorhinus canicula</name>
    <name type="common">Small-spotted catshark</name>
    <name type="synonym">Squalus canicula</name>
    <dbReference type="NCBI Taxonomy" id="7830"/>
    <lineage>
        <taxon>Eukaryota</taxon>
        <taxon>Metazoa</taxon>
        <taxon>Chordata</taxon>
        <taxon>Craniata</taxon>
        <taxon>Vertebrata</taxon>
        <taxon>Chondrichthyes</taxon>
        <taxon>Elasmobranchii</taxon>
        <taxon>Galeomorphii</taxon>
        <taxon>Galeoidea</taxon>
        <taxon>Carcharhiniformes</taxon>
        <taxon>Scyliorhinidae</taxon>
        <taxon>Scyliorhinus</taxon>
    </lineage>
</organism>
<sequence length="227" mass="25382">MIMSFFDQFLSPSFLGIPLIALAISIPWLMFPTPTNRWLNNRLLTLQAWFINRFIYQLMQPMNLGGHKWAILFTALMLFLITINLLGLLPYTFTPTTQLSLNMAFALPLWLTTVLIGMFNQPTIALGHLLPEGTPTPLVPVLIIIETISLFIRPLALGVRLTANLTAGHLLMQLIATAAFVLLTMMPTVALLTSLVLFLLTILEVAVAMIQAYVFVLLLSLYLQENV</sequence>
<keyword id="KW-0066">ATP synthesis</keyword>
<keyword id="KW-0138">CF(0)</keyword>
<keyword id="KW-0375">Hydrogen ion transport</keyword>
<keyword id="KW-0406">Ion transport</keyword>
<keyword id="KW-0472">Membrane</keyword>
<keyword id="KW-0496">Mitochondrion</keyword>
<keyword id="KW-0999">Mitochondrion inner membrane</keyword>
<keyword id="KW-0812">Transmembrane</keyword>
<keyword id="KW-1133">Transmembrane helix</keyword>
<keyword id="KW-0813">Transport</keyword>
<comment type="function">
    <text evidence="1">Subunit a, of the mitochondrial membrane ATP synthase complex (F(1)F(0) ATP synthase or Complex V) that produces ATP from ADP in the presence of a proton gradient across the membrane which is generated by electron transport complexes of the respiratory chain. ATP synthase complex consist of a soluble F(1) head domain - the catalytic core - and a membrane F(1) domain - the membrane proton channel. These two domains are linked by a central stalk rotating inside the F(1) region and a stationary peripheral stalk. During catalysis, ATP synthesis in the catalytic domain of F(1) is coupled via a rotary mechanism of the central stalk subunits to proton translocation. With the subunit c (ATP5MC1), forms the proton-conducting channel in the F(0) domain, that contains two crucial half-channels (inlet and outlet) that facilitate proton movement from the mitochondrial intermembrane space (IMS) into the matrix. Protons are taken up via the inlet half-channel and released through the outlet half-channel, following a Grotthuss mechanism.</text>
</comment>
<comment type="catalytic activity">
    <reaction evidence="1">
        <text>H(+)(in) = H(+)(out)</text>
        <dbReference type="Rhea" id="RHEA:34979"/>
        <dbReference type="ChEBI" id="CHEBI:15378"/>
    </reaction>
</comment>
<comment type="subunit">
    <text evidence="1">Component of the ATP synthase complex composed at least of ATP5F1A/subunit alpha, ATP5F1B/subunit beta, ATP5MC1/subunit c (homooctomer), MT-ATP6/subunit a, MT-ATP8/subunit 8, ATP5ME/subunit e, ATP5MF/subunit f, ATP5MG/subunit g, ATP5MK/subunit k, ATP5MJ/subunit j, ATP5F1C/subunit gamma, ATP5F1D/subunit delta, ATP5F1E/subunit epsilon, ATP5PF/subunit F6, ATP5PB/subunit b, ATP5PD/subunit d, ATP5PO/subunit OSCP. ATP synthase complex consists of a soluble F(1) head domain (subunits alpha(3) and beta(3)) - the catalytic core - and a membrane F(0) domain - the membrane proton channel (subunits c, a, 8, e, f, g, k and j). These two domains are linked by a central stalk (subunits gamma, delta, and epsilon) rotating inside the F1 region and a stationary peripheral stalk (subunits F6, b, d, and OSCP). Interacts with DNAJC30; interaction is direct.</text>
</comment>
<comment type="subcellular location">
    <subcellularLocation>
        <location>Mitochondrion inner membrane</location>
        <topology>Multi-pass membrane protein</topology>
    </subcellularLocation>
</comment>
<comment type="similarity">
    <text evidence="3">Belongs to the ATPase A chain family.</text>
</comment>
<name>ATP6_SCYCA</name>
<accession>O79406</accession>
<geneLocation type="mitochondrion"/>
<feature type="chain" id="PRO_0000082169" description="ATP synthase F(0) complex subunit a">
    <location>
        <begin position="1"/>
        <end position="227"/>
    </location>
</feature>
<feature type="transmembrane region" description="Helical" evidence="2">
    <location>
        <begin position="14"/>
        <end position="34"/>
    </location>
</feature>
<feature type="transmembrane region" description="Helical" evidence="2">
    <location>
        <begin position="69"/>
        <end position="89"/>
    </location>
</feature>
<feature type="transmembrane region" description="Helical" evidence="2">
    <location>
        <begin position="99"/>
        <end position="119"/>
    </location>
</feature>
<feature type="transmembrane region" description="Helical" evidence="2">
    <location>
        <begin position="139"/>
        <end position="159"/>
    </location>
</feature>
<feature type="transmembrane region" description="Helical" evidence="2">
    <location>
        <begin position="165"/>
        <end position="185"/>
    </location>
</feature>
<feature type="transmembrane region" description="Helical" evidence="2">
    <location>
        <begin position="190"/>
        <end position="210"/>
    </location>
</feature>
<proteinExistence type="inferred from homology"/>
<protein>
    <recommendedName>
        <fullName evidence="1">ATP synthase F(0) complex subunit a</fullName>
    </recommendedName>
    <alternativeName>
        <fullName>F-ATPase protein 6</fullName>
    </alternativeName>
    <alternativeName>
        <fullName evidence="1">Proton-conducting channel, ATP synthase F(0) complex subunit a</fullName>
    </alternativeName>
</protein>
<dbReference type="EMBL" id="Y16067">
    <property type="protein sequence ID" value="CAA76024.1"/>
    <property type="molecule type" value="Genomic_DNA"/>
</dbReference>
<dbReference type="PIR" id="T11305">
    <property type="entry name" value="T11305"/>
</dbReference>
<dbReference type="RefSeq" id="NP_007619.1">
    <property type="nucleotide sequence ID" value="NC_001950.1"/>
</dbReference>
<dbReference type="SMR" id="O79406"/>
<dbReference type="GeneID" id="808300"/>
<dbReference type="CTD" id="4508"/>
<dbReference type="OrthoDB" id="5976622at2759"/>
<dbReference type="GO" id="GO:0005743">
    <property type="term" value="C:mitochondrial inner membrane"/>
    <property type="evidence" value="ECO:0007669"/>
    <property type="project" value="UniProtKB-SubCell"/>
</dbReference>
<dbReference type="GO" id="GO:0045259">
    <property type="term" value="C:proton-transporting ATP synthase complex"/>
    <property type="evidence" value="ECO:0000250"/>
    <property type="project" value="UniProtKB"/>
</dbReference>
<dbReference type="GO" id="GO:0015252">
    <property type="term" value="F:proton channel activity"/>
    <property type="evidence" value="ECO:0000250"/>
    <property type="project" value="UniProtKB"/>
</dbReference>
<dbReference type="GO" id="GO:0046933">
    <property type="term" value="F:proton-transporting ATP synthase activity, rotational mechanism"/>
    <property type="evidence" value="ECO:0007669"/>
    <property type="project" value="TreeGrafter"/>
</dbReference>
<dbReference type="GO" id="GO:0015986">
    <property type="term" value="P:proton motive force-driven ATP synthesis"/>
    <property type="evidence" value="ECO:0000250"/>
    <property type="project" value="UniProtKB"/>
</dbReference>
<dbReference type="GO" id="GO:1902600">
    <property type="term" value="P:proton transmembrane transport"/>
    <property type="evidence" value="ECO:0000250"/>
    <property type="project" value="UniProtKB"/>
</dbReference>
<dbReference type="CDD" id="cd00310">
    <property type="entry name" value="ATP-synt_Fo_a_6"/>
    <property type="match status" value="1"/>
</dbReference>
<dbReference type="FunFam" id="1.20.120.220:FF:000004">
    <property type="entry name" value="ATP synthase subunit a"/>
    <property type="match status" value="1"/>
</dbReference>
<dbReference type="Gene3D" id="1.20.120.220">
    <property type="entry name" value="ATP synthase, F0 complex, subunit A"/>
    <property type="match status" value="1"/>
</dbReference>
<dbReference type="InterPro" id="IPR000568">
    <property type="entry name" value="ATP_synth_F0_asu"/>
</dbReference>
<dbReference type="InterPro" id="IPR023011">
    <property type="entry name" value="ATP_synth_F0_asu_AS"/>
</dbReference>
<dbReference type="InterPro" id="IPR045083">
    <property type="entry name" value="ATP_synth_F0_asu_bact/mt"/>
</dbReference>
<dbReference type="InterPro" id="IPR035908">
    <property type="entry name" value="F0_ATP_A_sf"/>
</dbReference>
<dbReference type="NCBIfam" id="TIGR01131">
    <property type="entry name" value="ATP_synt_6_or_A"/>
    <property type="match status" value="1"/>
</dbReference>
<dbReference type="PANTHER" id="PTHR11410">
    <property type="entry name" value="ATP SYNTHASE SUBUNIT A"/>
    <property type="match status" value="1"/>
</dbReference>
<dbReference type="PANTHER" id="PTHR11410:SF0">
    <property type="entry name" value="ATP SYNTHASE SUBUNIT A"/>
    <property type="match status" value="1"/>
</dbReference>
<dbReference type="Pfam" id="PF00119">
    <property type="entry name" value="ATP-synt_A"/>
    <property type="match status" value="1"/>
</dbReference>
<dbReference type="PRINTS" id="PR00123">
    <property type="entry name" value="ATPASEA"/>
</dbReference>
<dbReference type="SUPFAM" id="SSF81336">
    <property type="entry name" value="F1F0 ATP synthase subunit A"/>
    <property type="match status" value="1"/>
</dbReference>
<dbReference type="PROSITE" id="PS00449">
    <property type="entry name" value="ATPASE_A"/>
    <property type="match status" value="1"/>
</dbReference>
<gene>
    <name evidence="1" type="primary">MT-ATP6</name>
    <name type="synonym">ATP6</name>
    <name type="synonym">ATPASE6</name>
    <name type="synonym">MTATP6</name>
</gene>
<reference key="1">
    <citation type="journal article" date="1998" name="Genetics">
        <title>The complete nucleotide sequence of the mitochondrial DNA of the dogfish, Scyliorhinus canicula.</title>
        <authorList>
            <person name="Delarbre C."/>
            <person name="Spruyt N."/>
            <person name="Delmarre C."/>
            <person name="Gallut C."/>
            <person name="Barriel V."/>
            <person name="Janvier P."/>
            <person name="Laudet V."/>
            <person name="Gachelin G."/>
        </authorList>
    </citation>
    <scope>NUCLEOTIDE SEQUENCE [GENOMIC DNA]</scope>
    <source>
        <tissue>Muscle</tissue>
    </source>
</reference>
<evidence type="ECO:0000250" key="1">
    <source>
        <dbReference type="UniProtKB" id="P00846"/>
    </source>
</evidence>
<evidence type="ECO:0000255" key="2"/>
<evidence type="ECO:0000305" key="3"/>